<proteinExistence type="inferred from homology"/>
<comment type="function">
    <text evidence="1">Catalytic subunit of the periplasmic nitrate reductase complex NapAB. Receives electrons from NapB and catalyzes the reduction of nitrate to nitrite.</text>
</comment>
<comment type="catalytic activity">
    <reaction evidence="1">
        <text>2 Fe(II)-[cytochrome] + nitrate + 2 H(+) = 2 Fe(III)-[cytochrome] + nitrite + H2O</text>
        <dbReference type="Rhea" id="RHEA:12909"/>
        <dbReference type="Rhea" id="RHEA-COMP:11777"/>
        <dbReference type="Rhea" id="RHEA-COMP:11778"/>
        <dbReference type="ChEBI" id="CHEBI:15377"/>
        <dbReference type="ChEBI" id="CHEBI:15378"/>
        <dbReference type="ChEBI" id="CHEBI:16301"/>
        <dbReference type="ChEBI" id="CHEBI:17632"/>
        <dbReference type="ChEBI" id="CHEBI:29033"/>
        <dbReference type="ChEBI" id="CHEBI:29034"/>
        <dbReference type="EC" id="1.9.6.1"/>
    </reaction>
</comment>
<comment type="cofactor">
    <cofactor evidence="1">
        <name>[4Fe-4S] cluster</name>
        <dbReference type="ChEBI" id="CHEBI:49883"/>
    </cofactor>
    <text evidence="1">Binds 1 [4Fe-4S] cluster.</text>
</comment>
<comment type="cofactor">
    <cofactor evidence="1">
        <name>Mo-bis(molybdopterin guanine dinucleotide)</name>
        <dbReference type="ChEBI" id="CHEBI:60539"/>
    </cofactor>
    <text evidence="1">Binds 1 molybdenum-bis(molybdopterin guanine dinucleotide) (Mo-bis-MGD) cofactor per subunit.</text>
</comment>
<comment type="subunit">
    <text evidence="1">Component of the periplasmic nitrate reductase NapAB complex composed of NapA and NapB.</text>
</comment>
<comment type="subcellular location">
    <subcellularLocation>
        <location evidence="1">Periplasm</location>
    </subcellularLocation>
</comment>
<comment type="PTM">
    <text evidence="1">Predicted to be exported by the Tat system. The position of the signal peptide cleavage has not been experimentally proven.</text>
</comment>
<comment type="similarity">
    <text evidence="1">Belongs to the prokaryotic molybdopterin-containing oxidoreductase family. NasA/NapA/NarB subfamily.</text>
</comment>
<protein>
    <recommendedName>
        <fullName evidence="1">Periplasmic nitrate reductase</fullName>
        <ecNumber evidence="1">1.9.6.1</ecNumber>
    </recommendedName>
</protein>
<gene>
    <name evidence="1" type="primary">napA</name>
    <name type="ordered locus">HH_0158</name>
</gene>
<evidence type="ECO:0000255" key="1">
    <source>
        <dbReference type="HAMAP-Rule" id="MF_01630"/>
    </source>
</evidence>
<name>NAPA_HELHP</name>
<accession>Q7VJT5</accession>
<keyword id="KW-0004">4Fe-4S</keyword>
<keyword id="KW-0249">Electron transport</keyword>
<keyword id="KW-0408">Iron</keyword>
<keyword id="KW-0411">Iron-sulfur</keyword>
<keyword id="KW-0479">Metal-binding</keyword>
<keyword id="KW-0500">Molybdenum</keyword>
<keyword id="KW-0534">Nitrate assimilation</keyword>
<keyword id="KW-0560">Oxidoreductase</keyword>
<keyword id="KW-0574">Periplasm</keyword>
<keyword id="KW-1185">Reference proteome</keyword>
<keyword id="KW-0732">Signal</keyword>
<keyword id="KW-0813">Transport</keyword>
<reference key="1">
    <citation type="journal article" date="2003" name="Proc. Natl. Acad. Sci. U.S.A.">
        <title>The complete genome sequence of the carcinogenic bacterium Helicobacter hepaticus.</title>
        <authorList>
            <person name="Suerbaum S."/>
            <person name="Josenhans C."/>
            <person name="Sterzenbach T."/>
            <person name="Drescher B."/>
            <person name="Brandt P."/>
            <person name="Bell M."/>
            <person name="Droege M."/>
            <person name="Fartmann B."/>
            <person name="Fischer H.-P."/>
            <person name="Ge Z."/>
            <person name="Hoerster A."/>
            <person name="Holland R."/>
            <person name="Klein K."/>
            <person name="Koenig J."/>
            <person name="Macko L."/>
            <person name="Mendz G.L."/>
            <person name="Nyakatura G."/>
            <person name="Schauer D.B."/>
            <person name="Shen Z."/>
            <person name="Weber J."/>
            <person name="Frosch M."/>
            <person name="Fox J.G."/>
        </authorList>
    </citation>
    <scope>NUCLEOTIDE SEQUENCE [LARGE SCALE GENOMIC DNA]</scope>
    <source>
        <strain>ATCC 51449 / 3B1</strain>
    </source>
</reference>
<dbReference type="EC" id="1.9.6.1" evidence="1"/>
<dbReference type="EMBL" id="AE017125">
    <property type="protein sequence ID" value="AAP76755.1"/>
    <property type="molecule type" value="Genomic_DNA"/>
</dbReference>
<dbReference type="RefSeq" id="WP_011115001.1">
    <property type="nucleotide sequence ID" value="NC_004917.1"/>
</dbReference>
<dbReference type="SMR" id="Q7VJT5"/>
<dbReference type="STRING" id="235279.HH_0158"/>
<dbReference type="KEGG" id="hhe:HH_0158"/>
<dbReference type="eggNOG" id="COG0243">
    <property type="taxonomic scope" value="Bacteria"/>
</dbReference>
<dbReference type="HOGENOM" id="CLU_000422_13_4_7"/>
<dbReference type="OrthoDB" id="7376058at2"/>
<dbReference type="Proteomes" id="UP000002495">
    <property type="component" value="Chromosome"/>
</dbReference>
<dbReference type="GO" id="GO:0016020">
    <property type="term" value="C:membrane"/>
    <property type="evidence" value="ECO:0007669"/>
    <property type="project" value="TreeGrafter"/>
</dbReference>
<dbReference type="GO" id="GO:0009325">
    <property type="term" value="C:nitrate reductase complex"/>
    <property type="evidence" value="ECO:0007669"/>
    <property type="project" value="TreeGrafter"/>
</dbReference>
<dbReference type="GO" id="GO:0042597">
    <property type="term" value="C:periplasmic space"/>
    <property type="evidence" value="ECO:0007669"/>
    <property type="project" value="UniProtKB-SubCell"/>
</dbReference>
<dbReference type="GO" id="GO:0051539">
    <property type="term" value="F:4 iron, 4 sulfur cluster binding"/>
    <property type="evidence" value="ECO:0007669"/>
    <property type="project" value="UniProtKB-KW"/>
</dbReference>
<dbReference type="GO" id="GO:0009055">
    <property type="term" value="F:electron transfer activity"/>
    <property type="evidence" value="ECO:0007669"/>
    <property type="project" value="UniProtKB-UniRule"/>
</dbReference>
<dbReference type="GO" id="GO:0005506">
    <property type="term" value="F:iron ion binding"/>
    <property type="evidence" value="ECO:0007669"/>
    <property type="project" value="UniProtKB-UniRule"/>
</dbReference>
<dbReference type="GO" id="GO:0030151">
    <property type="term" value="F:molybdenum ion binding"/>
    <property type="evidence" value="ECO:0007669"/>
    <property type="project" value="InterPro"/>
</dbReference>
<dbReference type="GO" id="GO:0043546">
    <property type="term" value="F:molybdopterin cofactor binding"/>
    <property type="evidence" value="ECO:0007669"/>
    <property type="project" value="InterPro"/>
</dbReference>
<dbReference type="GO" id="GO:0050140">
    <property type="term" value="F:nitrate reductase (cytochrome) activity"/>
    <property type="evidence" value="ECO:0007669"/>
    <property type="project" value="UniProtKB-EC"/>
</dbReference>
<dbReference type="GO" id="GO:0006777">
    <property type="term" value="P:Mo-molybdopterin cofactor biosynthetic process"/>
    <property type="evidence" value="ECO:0007669"/>
    <property type="project" value="UniProtKB-UniRule"/>
</dbReference>
<dbReference type="GO" id="GO:0042128">
    <property type="term" value="P:nitrate assimilation"/>
    <property type="evidence" value="ECO:0007669"/>
    <property type="project" value="UniProtKB-UniRule"/>
</dbReference>
<dbReference type="CDD" id="cd02791">
    <property type="entry name" value="MopB_CT_Nitrate-R-NapA-like"/>
    <property type="match status" value="1"/>
</dbReference>
<dbReference type="FunFam" id="2.40.40.20:FF:000005">
    <property type="entry name" value="Periplasmic nitrate reductase"/>
    <property type="match status" value="1"/>
</dbReference>
<dbReference type="Gene3D" id="2.40.40.20">
    <property type="match status" value="1"/>
</dbReference>
<dbReference type="Gene3D" id="3.30.200.210">
    <property type="match status" value="2"/>
</dbReference>
<dbReference type="Gene3D" id="3.40.50.740">
    <property type="match status" value="1"/>
</dbReference>
<dbReference type="Gene3D" id="3.40.228.10">
    <property type="entry name" value="Dimethylsulfoxide Reductase, domain 2"/>
    <property type="match status" value="1"/>
</dbReference>
<dbReference type="HAMAP" id="MF_01630">
    <property type="entry name" value="Nitrate_reduct_NapA"/>
    <property type="match status" value="1"/>
</dbReference>
<dbReference type="InterPro" id="IPR009010">
    <property type="entry name" value="Asp_de-COase-like_dom_sf"/>
</dbReference>
<dbReference type="InterPro" id="IPR041957">
    <property type="entry name" value="CT_Nitrate-R-NapA-like"/>
</dbReference>
<dbReference type="InterPro" id="IPR006657">
    <property type="entry name" value="MoPterin_dinucl-bd_dom"/>
</dbReference>
<dbReference type="InterPro" id="IPR006656">
    <property type="entry name" value="Mopterin_OxRdtase"/>
</dbReference>
<dbReference type="InterPro" id="IPR006963">
    <property type="entry name" value="Mopterin_OxRdtase_4Fe-4S_dom"/>
</dbReference>
<dbReference type="InterPro" id="IPR027467">
    <property type="entry name" value="MopterinOxRdtase_cofactor_BS"/>
</dbReference>
<dbReference type="InterPro" id="IPR010051">
    <property type="entry name" value="Periplasm_NO3_reductase_lsu"/>
</dbReference>
<dbReference type="InterPro" id="IPR050123">
    <property type="entry name" value="Prok_molybdopt-oxidoreductase"/>
</dbReference>
<dbReference type="InterPro" id="IPR006311">
    <property type="entry name" value="TAT_signal"/>
</dbReference>
<dbReference type="InterPro" id="IPR019546">
    <property type="entry name" value="TAT_signal_bac_arc"/>
</dbReference>
<dbReference type="NCBIfam" id="TIGR01706">
    <property type="entry name" value="NAPA"/>
    <property type="match status" value="1"/>
</dbReference>
<dbReference type="NCBIfam" id="NF010055">
    <property type="entry name" value="PRK13532.1"/>
    <property type="match status" value="1"/>
</dbReference>
<dbReference type="NCBIfam" id="TIGR01409">
    <property type="entry name" value="TAT_signal_seq"/>
    <property type="match status" value="1"/>
</dbReference>
<dbReference type="PANTHER" id="PTHR43105:SF11">
    <property type="entry name" value="PERIPLASMIC NITRATE REDUCTASE"/>
    <property type="match status" value="1"/>
</dbReference>
<dbReference type="PANTHER" id="PTHR43105">
    <property type="entry name" value="RESPIRATORY NITRATE REDUCTASE"/>
    <property type="match status" value="1"/>
</dbReference>
<dbReference type="Pfam" id="PF04879">
    <property type="entry name" value="Molybdop_Fe4S4"/>
    <property type="match status" value="1"/>
</dbReference>
<dbReference type="Pfam" id="PF00384">
    <property type="entry name" value="Molybdopterin"/>
    <property type="match status" value="1"/>
</dbReference>
<dbReference type="Pfam" id="PF01568">
    <property type="entry name" value="Molydop_binding"/>
    <property type="match status" value="1"/>
</dbReference>
<dbReference type="Pfam" id="PF10518">
    <property type="entry name" value="TAT_signal"/>
    <property type="match status" value="1"/>
</dbReference>
<dbReference type="SMART" id="SM00926">
    <property type="entry name" value="Molybdop_Fe4S4"/>
    <property type="match status" value="1"/>
</dbReference>
<dbReference type="SUPFAM" id="SSF50692">
    <property type="entry name" value="ADC-like"/>
    <property type="match status" value="1"/>
</dbReference>
<dbReference type="SUPFAM" id="SSF53706">
    <property type="entry name" value="Formate dehydrogenase/DMSO reductase, domains 1-3"/>
    <property type="match status" value="1"/>
</dbReference>
<dbReference type="PROSITE" id="PS51669">
    <property type="entry name" value="4FE4S_MOW_BIS_MGD"/>
    <property type="match status" value="1"/>
</dbReference>
<dbReference type="PROSITE" id="PS00551">
    <property type="entry name" value="MOLYBDOPTERIN_PROK_1"/>
    <property type="match status" value="1"/>
</dbReference>
<dbReference type="PROSITE" id="PS51318">
    <property type="entry name" value="TAT"/>
    <property type="match status" value="1"/>
</dbReference>
<feature type="signal peptide" description="Tat-type signal" evidence="1">
    <location>
        <begin position="1"/>
        <end position="42"/>
    </location>
</feature>
<feature type="chain" id="PRO_0000045989" description="Periplasmic nitrate reductase" evidence="1">
    <location>
        <begin position="43"/>
        <end position="937"/>
    </location>
</feature>
<feature type="domain" description="4Fe-4S Mo/W bis-MGD-type" evidence="1">
    <location>
        <begin position="49"/>
        <end position="110"/>
    </location>
</feature>
<feature type="binding site" evidence="1">
    <location>
        <position position="56"/>
    </location>
    <ligand>
        <name>[4Fe-4S] cluster</name>
        <dbReference type="ChEBI" id="CHEBI:49883"/>
    </ligand>
</feature>
<feature type="binding site" evidence="1">
    <location>
        <position position="59"/>
    </location>
    <ligand>
        <name>[4Fe-4S] cluster</name>
        <dbReference type="ChEBI" id="CHEBI:49883"/>
    </ligand>
</feature>
<feature type="binding site" evidence="1">
    <location>
        <position position="63"/>
    </location>
    <ligand>
        <name>[4Fe-4S] cluster</name>
        <dbReference type="ChEBI" id="CHEBI:49883"/>
    </ligand>
</feature>
<feature type="binding site" evidence="1">
    <location>
        <position position="96"/>
    </location>
    <ligand>
        <name>[4Fe-4S] cluster</name>
        <dbReference type="ChEBI" id="CHEBI:49883"/>
    </ligand>
</feature>
<feature type="binding site" evidence="1">
    <location>
        <position position="98"/>
    </location>
    <ligand>
        <name>Mo-bis(molybdopterin guanine dinucleotide)</name>
        <dbReference type="ChEBI" id="CHEBI:60539"/>
    </ligand>
</feature>
<feature type="binding site" evidence="1">
    <location>
        <position position="166"/>
    </location>
    <ligand>
        <name>Mo-bis(molybdopterin guanine dinucleotide)</name>
        <dbReference type="ChEBI" id="CHEBI:60539"/>
    </ligand>
</feature>
<feature type="binding site" evidence="1">
    <location>
        <position position="191"/>
    </location>
    <ligand>
        <name>Mo-bis(molybdopterin guanine dinucleotide)</name>
        <dbReference type="ChEBI" id="CHEBI:60539"/>
    </ligand>
</feature>
<feature type="binding site" evidence="1">
    <location>
        <position position="195"/>
    </location>
    <ligand>
        <name>Mo-bis(molybdopterin guanine dinucleotide)</name>
        <dbReference type="ChEBI" id="CHEBI:60539"/>
    </ligand>
</feature>
<feature type="binding site" evidence="1">
    <location>
        <begin position="228"/>
        <end position="235"/>
    </location>
    <ligand>
        <name>Mo-bis(molybdopterin guanine dinucleotide)</name>
        <dbReference type="ChEBI" id="CHEBI:60539"/>
    </ligand>
</feature>
<feature type="binding site" evidence="1">
    <location>
        <position position="433"/>
    </location>
    <ligand>
        <name>Mo-bis(molybdopterin guanine dinucleotide)</name>
        <dbReference type="ChEBI" id="CHEBI:60539"/>
    </ligand>
</feature>
<feature type="binding site" evidence="1">
    <location>
        <position position="437"/>
    </location>
    <ligand>
        <name>Mo-bis(molybdopterin guanine dinucleotide)</name>
        <dbReference type="ChEBI" id="CHEBI:60539"/>
    </ligand>
</feature>
<feature type="binding site" evidence="1">
    <location>
        <position position="543"/>
    </location>
    <ligand>
        <name>Mo-bis(molybdopterin guanine dinucleotide)</name>
        <dbReference type="ChEBI" id="CHEBI:60539"/>
    </ligand>
</feature>
<feature type="binding site" evidence="1">
    <location>
        <begin position="568"/>
        <end position="569"/>
    </location>
    <ligand>
        <name>Mo-bis(molybdopterin guanine dinucleotide)</name>
        <dbReference type="ChEBI" id="CHEBI:60539"/>
    </ligand>
</feature>
<feature type="binding site" evidence="1">
    <location>
        <position position="591"/>
    </location>
    <ligand>
        <name>Mo-bis(molybdopterin guanine dinucleotide)</name>
        <dbReference type="ChEBI" id="CHEBI:60539"/>
    </ligand>
</feature>
<feature type="binding site" evidence="1">
    <location>
        <position position="618"/>
    </location>
    <ligand>
        <name>Mo-bis(molybdopterin guanine dinucleotide)</name>
        <dbReference type="ChEBI" id="CHEBI:60539"/>
    </ligand>
</feature>
<feature type="binding site" evidence="1">
    <location>
        <begin position="827"/>
        <end position="836"/>
    </location>
    <ligand>
        <name>Mo-bis(molybdopterin guanine dinucleotide)</name>
        <dbReference type="ChEBI" id="CHEBI:60539"/>
    </ligand>
</feature>
<feature type="binding site" evidence="1">
    <location>
        <position position="903"/>
    </location>
    <ligand>
        <name>substrate</name>
    </ligand>
</feature>
<feature type="binding site" evidence="1">
    <location>
        <position position="911"/>
    </location>
    <ligand>
        <name>Mo-bis(molybdopterin guanine dinucleotide)</name>
        <dbReference type="ChEBI" id="CHEBI:60539"/>
    </ligand>
</feature>
<feature type="binding site" evidence="1">
    <location>
        <position position="928"/>
    </location>
    <ligand>
        <name>Mo-bis(molybdopterin guanine dinucleotide)</name>
        <dbReference type="ChEBI" id="CHEBI:60539"/>
    </ligand>
</feature>
<organism>
    <name type="scientific">Helicobacter hepaticus (strain ATCC 51449 / 3B1)</name>
    <dbReference type="NCBI Taxonomy" id="235279"/>
    <lineage>
        <taxon>Bacteria</taxon>
        <taxon>Pseudomonadati</taxon>
        <taxon>Campylobacterota</taxon>
        <taxon>Epsilonproteobacteria</taxon>
        <taxon>Campylobacterales</taxon>
        <taxon>Helicobacteraceae</taxon>
        <taxon>Helicobacter</taxon>
    </lineage>
</organism>
<sequence>MTSKIQGKKPTLSRRDFIKSAAAASAAASVGLSIPSVMSAEAQNAQKLWKWDKSVCRFCGTGCGIMVATQKDNTGQAKIVAIKGDPEAPVNRGLNCIKGYFCAKIMYGADRLTTPLLRVNSNGEFDKKGKFAPVSWKRAFDEMEKQFKKAYNELGPTGIAVFGSGQYTIQEGYAAVKLVKGGFRSNNIDPNARHCMASAVVGFMETFGIDEPAGCYDDIELTDTIVTWGANMAEMHPVLWSRVTDRKLSSSNVKVINLSTYTNRTSDLADIEIIFKPHTDLAIWNFLAREIINRNAVDEAFVKENCVFSTGFVNIGYGMRNNPQHPKFKPEERDIVAKEVSKIVSNDEGITLQYLGIKAGEEMKMDKAGAAGNHWGISFEDFKKGLEPYTLDFVANLAKGNPDESIESFKQKLQSLADYYIDKNRKIVSFWTMGMNQHQRGTWVNEQSYMVHMLLGKQAKPGSGAFSLTGQPSACGTAREVGTFSHRLPADMVVANPKHREITEKIWHLPSGTLNSKIGAPYLKIMRDLEDGNIKWAWVQVNNPWQNTANANHWIAAAREQDNFIVVSECYPGISAKVADLILPTAMIYEKWGAYGNAERRTQHWKQQVVAPGEAMPDIWQMAEFAKRFKLSEVWDKGYEALDIKPVLESAKAMGYTEEDTLFDVLFANKNAKNFSAQDALLKNEFNTEVLGDSRNVEDGNGEAFKGYGFFIQKYLWEEYRQFGLGHAHDLADFDTYHRVRGLRWPVVNGKETQWRFNAKYDFYAQKLGNGKAFAFYGNKGKDMPAGSLNAPSEEKVSIDNKAKIFLRPYMDPCEMPDKEYPMWLCTGRVLEHWHSGTMTMRVPELYRAVPEALCYMHPDDANAQNLEQNQVVWVESRRGKVKAKLDLRGRNRPPKGLIYVPWFDENVFINKVCLDATCPISKQTDFKKCAVKVYKA</sequence>